<protein>
    <recommendedName>
        <fullName>Stanniocalcin-1</fullName>
        <shortName>STC-1</shortName>
    </recommendedName>
</protein>
<organism>
    <name type="scientific">Bos taurus</name>
    <name type="common">Bovine</name>
    <dbReference type="NCBI Taxonomy" id="9913"/>
    <lineage>
        <taxon>Eukaryota</taxon>
        <taxon>Metazoa</taxon>
        <taxon>Chordata</taxon>
        <taxon>Craniata</taxon>
        <taxon>Vertebrata</taxon>
        <taxon>Euteleostomi</taxon>
        <taxon>Mammalia</taxon>
        <taxon>Eutheria</taxon>
        <taxon>Laurasiatheria</taxon>
        <taxon>Artiodactyla</taxon>
        <taxon>Ruminantia</taxon>
        <taxon>Pecora</taxon>
        <taxon>Bovidae</taxon>
        <taxon>Bovinae</taxon>
        <taxon>Bos</taxon>
    </lineage>
</organism>
<evidence type="ECO:0000250" key="1"/>
<evidence type="ECO:0000255" key="2"/>
<evidence type="ECO:0000305" key="3"/>
<keyword id="KW-1015">Disulfide bond</keyword>
<keyword id="KW-0325">Glycoprotein</keyword>
<keyword id="KW-0372">Hormone</keyword>
<keyword id="KW-1185">Reference proteome</keyword>
<keyword id="KW-0964">Secreted</keyword>
<keyword id="KW-0732">Signal</keyword>
<accession>Q9N0T1</accession>
<accession>A5D9D9</accession>
<accession>Q2KJA8</accession>
<comment type="function">
    <text evidence="1">Stimulates renal phosphate reabsorption, and could therefore prevent hypercalcemia.</text>
</comment>
<comment type="subunit">
    <text evidence="1">Homodimer; disulfide-linked.</text>
</comment>
<comment type="subcellular location">
    <subcellularLocation>
        <location evidence="1">Secreted</location>
    </subcellularLocation>
</comment>
<comment type="similarity">
    <text evidence="3">Belongs to the stanniocalcin family.</text>
</comment>
<dbReference type="EMBL" id="AF257506">
    <property type="protein sequence ID" value="AAF68996.1"/>
    <property type="molecule type" value="mRNA"/>
</dbReference>
<dbReference type="EMBL" id="BT030558">
    <property type="protein sequence ID" value="ABQ12998.1"/>
    <property type="molecule type" value="mRNA"/>
</dbReference>
<dbReference type="EMBL" id="BC105435">
    <property type="protein sequence ID" value="AAI05436.1"/>
    <property type="molecule type" value="mRNA"/>
</dbReference>
<dbReference type="RefSeq" id="NP_788842.2">
    <property type="nucleotide sequence ID" value="NM_176669.3"/>
</dbReference>
<dbReference type="SMR" id="Q9N0T1"/>
<dbReference type="FunCoup" id="Q9N0T1">
    <property type="interactions" value="117"/>
</dbReference>
<dbReference type="STRING" id="9913.ENSBTAP00000002200"/>
<dbReference type="GlyCosmos" id="Q9N0T1">
    <property type="glycosylation" value="2 sites, No reported glycans"/>
</dbReference>
<dbReference type="GlyGen" id="Q9N0T1">
    <property type="glycosylation" value="2 sites"/>
</dbReference>
<dbReference type="PaxDb" id="9913-ENSBTAP00000002200"/>
<dbReference type="Ensembl" id="ENSBTAT00000002200.4">
    <property type="protein sequence ID" value="ENSBTAP00000002200.3"/>
    <property type="gene ID" value="ENSBTAG00000001687.4"/>
</dbReference>
<dbReference type="GeneID" id="338078"/>
<dbReference type="KEGG" id="bta:338078"/>
<dbReference type="CTD" id="6781"/>
<dbReference type="VEuPathDB" id="HostDB:ENSBTAG00000001687"/>
<dbReference type="VGNC" id="VGNC:35377">
    <property type="gene designation" value="STC1"/>
</dbReference>
<dbReference type="eggNOG" id="ENOG502QU7E">
    <property type="taxonomic scope" value="Eukaryota"/>
</dbReference>
<dbReference type="GeneTree" id="ENSGT00390000005989"/>
<dbReference type="HOGENOM" id="CLU_064102_1_1_1"/>
<dbReference type="InParanoid" id="Q9N0T1"/>
<dbReference type="OMA" id="MCSIAKR"/>
<dbReference type="OrthoDB" id="10025265at2759"/>
<dbReference type="TreeFam" id="TF324693"/>
<dbReference type="Proteomes" id="UP000009136">
    <property type="component" value="Chromosome 8"/>
</dbReference>
<dbReference type="Bgee" id="ENSBTAG00000001687">
    <property type="expression patterns" value="Expressed in intramuscular adipose tissue and 98 other cell types or tissues"/>
</dbReference>
<dbReference type="GO" id="GO:0005615">
    <property type="term" value="C:extracellular space"/>
    <property type="evidence" value="ECO:0000318"/>
    <property type="project" value="GO_Central"/>
</dbReference>
<dbReference type="GO" id="GO:0005179">
    <property type="term" value="F:hormone activity"/>
    <property type="evidence" value="ECO:0007669"/>
    <property type="project" value="UniProtKB-KW"/>
</dbReference>
<dbReference type="GO" id="GO:0006874">
    <property type="term" value="P:intracellular calcium ion homeostasis"/>
    <property type="evidence" value="ECO:0000318"/>
    <property type="project" value="GO_Central"/>
</dbReference>
<dbReference type="InterPro" id="IPR004978">
    <property type="entry name" value="Stanniocalcin"/>
</dbReference>
<dbReference type="PANTHER" id="PTHR11245">
    <property type="entry name" value="STANNIOCALCIN"/>
    <property type="match status" value="1"/>
</dbReference>
<dbReference type="PANTHER" id="PTHR11245:SF1">
    <property type="entry name" value="STANNIOCALCIN-1"/>
    <property type="match status" value="1"/>
</dbReference>
<dbReference type="Pfam" id="PF03298">
    <property type="entry name" value="Stanniocalcin"/>
    <property type="match status" value="1"/>
</dbReference>
<reference key="1">
    <citation type="submission" date="2000-04" db="EMBL/GenBank/DDBJ databases">
        <title>Bovine stanniocalcin cDNA sequence.</title>
        <authorList>
            <person name="DiMattia G.E."/>
        </authorList>
    </citation>
    <scope>NUCLEOTIDE SEQUENCE [MRNA]</scope>
    <source>
        <tissue>Ovary</tissue>
    </source>
</reference>
<reference key="2">
    <citation type="journal article" date="2005" name="BMC Genomics">
        <title>Characterization of 954 bovine full-CDS cDNA sequences.</title>
        <authorList>
            <person name="Harhay G.P."/>
            <person name="Sonstegard T.S."/>
            <person name="Keele J.W."/>
            <person name="Heaton M.P."/>
            <person name="Clawson M.L."/>
            <person name="Snelling W.M."/>
            <person name="Wiedmann R.T."/>
            <person name="Van Tassell C.P."/>
            <person name="Smith T.P.L."/>
        </authorList>
    </citation>
    <scope>NUCLEOTIDE SEQUENCE [LARGE SCALE MRNA]</scope>
</reference>
<reference key="3">
    <citation type="submission" date="2005-09" db="EMBL/GenBank/DDBJ databases">
        <authorList>
            <consortium name="NIH - Mammalian Gene Collection (MGC) project"/>
        </authorList>
    </citation>
    <scope>NUCLEOTIDE SEQUENCE [LARGE SCALE MRNA]</scope>
    <source>
        <strain>Hereford</strain>
        <tissue>Heart ventricle</tissue>
    </source>
</reference>
<sequence length="247" mass="27555">MLQNSAVLLVLVISASATHEAEQNDSVSLRKSRVAAQNSAEVIRCLNSALQVGCGAFACLENSTCDTDGMYDICKSFLYSAAKFDTQGKAFVKESLKCIANGVTSKVFLAIRRCSTFQRMIAEVQEECYTKLNVCSVAKRNPEAITEVVQLPNHFSNRYYNRLVRSLLDCDEDTVSTIRDSLMEKIGPNMASLFHILQTDHCAHTQQRADFNRRRANEPQKLKVLLRNLRGEVASPSHIKRTSQESA</sequence>
<proteinExistence type="evidence at transcript level"/>
<name>STC1_BOVIN</name>
<gene>
    <name type="primary">STC1</name>
    <name type="synonym">STC</name>
</gene>
<feature type="signal peptide" evidence="2">
    <location>
        <begin position="1"/>
        <end position="21"/>
    </location>
</feature>
<feature type="chain" id="PRO_0000033296" description="Stanniocalcin-1">
    <location>
        <begin position="22"/>
        <end position="247"/>
    </location>
</feature>
<feature type="glycosylation site" description="N-linked (GlcNAc...) asparagine" evidence="2">
    <location>
        <position position="24"/>
    </location>
</feature>
<feature type="glycosylation site" description="N-linked (GlcNAc...) asparagine" evidence="2">
    <location>
        <position position="62"/>
    </location>
</feature>
<feature type="disulfide bond" evidence="1">
    <location>
        <begin position="45"/>
        <end position="59"/>
    </location>
</feature>
<feature type="disulfide bond" evidence="1">
    <location>
        <begin position="54"/>
        <end position="74"/>
    </location>
</feature>
<feature type="disulfide bond" evidence="1">
    <location>
        <begin position="65"/>
        <end position="114"/>
    </location>
</feature>
<feature type="disulfide bond" evidence="1">
    <location>
        <begin position="98"/>
        <end position="128"/>
    </location>
</feature>
<feature type="disulfide bond" evidence="1">
    <location>
        <begin position="135"/>
        <end position="170"/>
    </location>
</feature>
<feature type="disulfide bond" description="Interchain" evidence="1">
    <location>
        <position position="202"/>
    </location>
</feature>
<feature type="sequence conflict" description="In Ref. 1; AAF68996." evidence="3" ref="1">
    <original>L</original>
    <variation>I</variation>
    <location>
        <position position="8"/>
    </location>
</feature>